<organism>
    <name type="scientific">Sorangium cellulosum (strain So ce56)</name>
    <name type="common">Polyangium cellulosum (strain So ce56)</name>
    <dbReference type="NCBI Taxonomy" id="448385"/>
    <lineage>
        <taxon>Bacteria</taxon>
        <taxon>Pseudomonadati</taxon>
        <taxon>Myxococcota</taxon>
        <taxon>Polyangia</taxon>
        <taxon>Polyangiales</taxon>
        <taxon>Polyangiaceae</taxon>
        <taxon>Sorangium</taxon>
    </lineage>
</organism>
<keyword id="KW-0028">Amino-acid biosynthesis</keyword>
<keyword id="KW-0100">Branched-chain amino acid biosynthesis</keyword>
<keyword id="KW-0460">Magnesium</keyword>
<keyword id="KW-0479">Metal-binding</keyword>
<keyword id="KW-0521">NADP</keyword>
<keyword id="KW-0560">Oxidoreductase</keyword>
<keyword id="KW-1185">Reference proteome</keyword>
<reference key="1">
    <citation type="journal article" date="2007" name="Nat. Biotechnol.">
        <title>Complete genome sequence of the myxobacterium Sorangium cellulosum.</title>
        <authorList>
            <person name="Schneiker S."/>
            <person name="Perlova O."/>
            <person name="Kaiser O."/>
            <person name="Gerth K."/>
            <person name="Alici A."/>
            <person name="Altmeyer M.O."/>
            <person name="Bartels D."/>
            <person name="Bekel T."/>
            <person name="Beyer S."/>
            <person name="Bode E."/>
            <person name="Bode H.B."/>
            <person name="Bolten C.J."/>
            <person name="Choudhuri J.V."/>
            <person name="Doss S."/>
            <person name="Elnakady Y.A."/>
            <person name="Frank B."/>
            <person name="Gaigalat L."/>
            <person name="Goesmann A."/>
            <person name="Groeger C."/>
            <person name="Gross F."/>
            <person name="Jelsbak L."/>
            <person name="Jelsbak L."/>
            <person name="Kalinowski J."/>
            <person name="Kegler C."/>
            <person name="Knauber T."/>
            <person name="Konietzny S."/>
            <person name="Kopp M."/>
            <person name="Krause L."/>
            <person name="Krug D."/>
            <person name="Linke B."/>
            <person name="Mahmud T."/>
            <person name="Martinez-Arias R."/>
            <person name="McHardy A.C."/>
            <person name="Merai M."/>
            <person name="Meyer F."/>
            <person name="Mormann S."/>
            <person name="Munoz-Dorado J."/>
            <person name="Perez J."/>
            <person name="Pradella S."/>
            <person name="Rachid S."/>
            <person name="Raddatz G."/>
            <person name="Rosenau F."/>
            <person name="Rueckert C."/>
            <person name="Sasse F."/>
            <person name="Scharfe M."/>
            <person name="Schuster S.C."/>
            <person name="Suen G."/>
            <person name="Treuner-Lange A."/>
            <person name="Velicer G.J."/>
            <person name="Vorholter F.-J."/>
            <person name="Weissman K.J."/>
            <person name="Welch R.D."/>
            <person name="Wenzel S.C."/>
            <person name="Whitworth D.E."/>
            <person name="Wilhelm S."/>
            <person name="Wittmann C."/>
            <person name="Bloecker H."/>
            <person name="Puehler A."/>
            <person name="Mueller R."/>
        </authorList>
    </citation>
    <scope>NUCLEOTIDE SEQUENCE [LARGE SCALE GENOMIC DNA]</scope>
    <source>
        <strain>So ce56</strain>
    </source>
</reference>
<name>ILVC_SORC5</name>
<dbReference type="EC" id="1.1.1.86" evidence="1"/>
<dbReference type="EMBL" id="AM746676">
    <property type="protein sequence ID" value="CAN93892.1"/>
    <property type="molecule type" value="Genomic_DNA"/>
</dbReference>
<dbReference type="RefSeq" id="WP_012236362.1">
    <property type="nucleotide sequence ID" value="NC_010162.1"/>
</dbReference>
<dbReference type="SMR" id="A9GW78"/>
<dbReference type="STRING" id="448385.sce3732"/>
<dbReference type="KEGG" id="scl:sce3732"/>
<dbReference type="eggNOG" id="COG0059">
    <property type="taxonomic scope" value="Bacteria"/>
</dbReference>
<dbReference type="HOGENOM" id="CLU_033821_0_1_7"/>
<dbReference type="OrthoDB" id="9804088at2"/>
<dbReference type="BioCyc" id="SCEL448385:SCE_RS19125-MONOMER"/>
<dbReference type="UniPathway" id="UPA00047">
    <property type="reaction ID" value="UER00056"/>
</dbReference>
<dbReference type="UniPathway" id="UPA00049">
    <property type="reaction ID" value="UER00060"/>
</dbReference>
<dbReference type="Proteomes" id="UP000002139">
    <property type="component" value="Chromosome"/>
</dbReference>
<dbReference type="GO" id="GO:0005829">
    <property type="term" value="C:cytosol"/>
    <property type="evidence" value="ECO:0007669"/>
    <property type="project" value="TreeGrafter"/>
</dbReference>
<dbReference type="GO" id="GO:0004455">
    <property type="term" value="F:ketol-acid reductoisomerase activity"/>
    <property type="evidence" value="ECO:0007669"/>
    <property type="project" value="UniProtKB-UniRule"/>
</dbReference>
<dbReference type="GO" id="GO:0000287">
    <property type="term" value="F:magnesium ion binding"/>
    <property type="evidence" value="ECO:0007669"/>
    <property type="project" value="UniProtKB-UniRule"/>
</dbReference>
<dbReference type="GO" id="GO:0050661">
    <property type="term" value="F:NADP binding"/>
    <property type="evidence" value="ECO:0007669"/>
    <property type="project" value="InterPro"/>
</dbReference>
<dbReference type="GO" id="GO:0009097">
    <property type="term" value="P:isoleucine biosynthetic process"/>
    <property type="evidence" value="ECO:0007669"/>
    <property type="project" value="UniProtKB-UniRule"/>
</dbReference>
<dbReference type="GO" id="GO:0009099">
    <property type="term" value="P:L-valine biosynthetic process"/>
    <property type="evidence" value="ECO:0007669"/>
    <property type="project" value="UniProtKB-UniRule"/>
</dbReference>
<dbReference type="FunFam" id="3.40.50.720:FF:000023">
    <property type="entry name" value="Ketol-acid reductoisomerase (NADP(+))"/>
    <property type="match status" value="1"/>
</dbReference>
<dbReference type="Gene3D" id="6.10.240.10">
    <property type="match status" value="1"/>
</dbReference>
<dbReference type="Gene3D" id="3.40.50.720">
    <property type="entry name" value="NAD(P)-binding Rossmann-like Domain"/>
    <property type="match status" value="1"/>
</dbReference>
<dbReference type="HAMAP" id="MF_00435">
    <property type="entry name" value="IlvC"/>
    <property type="match status" value="1"/>
</dbReference>
<dbReference type="InterPro" id="IPR008927">
    <property type="entry name" value="6-PGluconate_DH-like_C_sf"/>
</dbReference>
<dbReference type="InterPro" id="IPR013023">
    <property type="entry name" value="KARI"/>
</dbReference>
<dbReference type="InterPro" id="IPR000506">
    <property type="entry name" value="KARI_C"/>
</dbReference>
<dbReference type="InterPro" id="IPR013116">
    <property type="entry name" value="KARI_N"/>
</dbReference>
<dbReference type="InterPro" id="IPR014359">
    <property type="entry name" value="KARI_prok"/>
</dbReference>
<dbReference type="InterPro" id="IPR036291">
    <property type="entry name" value="NAD(P)-bd_dom_sf"/>
</dbReference>
<dbReference type="NCBIfam" id="TIGR00465">
    <property type="entry name" value="ilvC"/>
    <property type="match status" value="1"/>
</dbReference>
<dbReference type="NCBIfam" id="NF004017">
    <property type="entry name" value="PRK05479.1"/>
    <property type="match status" value="1"/>
</dbReference>
<dbReference type="NCBIfam" id="NF009940">
    <property type="entry name" value="PRK13403.1"/>
    <property type="match status" value="1"/>
</dbReference>
<dbReference type="PANTHER" id="PTHR21371">
    <property type="entry name" value="KETOL-ACID REDUCTOISOMERASE, MITOCHONDRIAL"/>
    <property type="match status" value="1"/>
</dbReference>
<dbReference type="PANTHER" id="PTHR21371:SF1">
    <property type="entry name" value="KETOL-ACID REDUCTOISOMERASE, MITOCHONDRIAL"/>
    <property type="match status" value="1"/>
</dbReference>
<dbReference type="Pfam" id="PF01450">
    <property type="entry name" value="KARI_C"/>
    <property type="match status" value="1"/>
</dbReference>
<dbReference type="Pfam" id="PF07991">
    <property type="entry name" value="KARI_N"/>
    <property type="match status" value="1"/>
</dbReference>
<dbReference type="PIRSF" id="PIRSF000116">
    <property type="entry name" value="IlvC_gammaproteo"/>
    <property type="match status" value="1"/>
</dbReference>
<dbReference type="SUPFAM" id="SSF48179">
    <property type="entry name" value="6-phosphogluconate dehydrogenase C-terminal domain-like"/>
    <property type="match status" value="1"/>
</dbReference>
<dbReference type="SUPFAM" id="SSF51735">
    <property type="entry name" value="NAD(P)-binding Rossmann-fold domains"/>
    <property type="match status" value="1"/>
</dbReference>
<dbReference type="PROSITE" id="PS51851">
    <property type="entry name" value="KARI_C"/>
    <property type="match status" value="1"/>
</dbReference>
<dbReference type="PROSITE" id="PS51850">
    <property type="entry name" value="KARI_N"/>
    <property type="match status" value="1"/>
</dbReference>
<protein>
    <recommendedName>
        <fullName evidence="1">Ketol-acid reductoisomerase (NADP(+))</fullName>
        <shortName evidence="1">KARI</shortName>
        <ecNumber evidence="1">1.1.1.86</ecNumber>
    </recommendedName>
    <alternativeName>
        <fullName evidence="1">Acetohydroxy-acid isomeroreductase</fullName>
        <shortName evidence="1">AHIR</shortName>
    </alternativeName>
    <alternativeName>
        <fullName evidence="1">Alpha-keto-beta-hydroxylacyl reductoisomerase</fullName>
    </alternativeName>
    <alternativeName>
        <fullName evidence="1">Ketol-acid reductoisomerase type 1</fullName>
    </alternativeName>
    <alternativeName>
        <fullName evidence="1">Ketol-acid reductoisomerase type I</fullName>
    </alternativeName>
</protein>
<comment type="function">
    <text evidence="1">Involved in the biosynthesis of branched-chain amino acids (BCAA). Catalyzes an alkyl-migration followed by a ketol-acid reduction of (S)-2-acetolactate (S2AL) to yield (R)-2,3-dihydroxy-isovalerate. In the isomerase reaction, S2AL is rearranged via a Mg-dependent methyl migration to produce 3-hydroxy-3-methyl-2-ketobutyrate (HMKB). In the reductase reaction, this 2-ketoacid undergoes a metal-dependent reduction by NADPH to yield (R)-2,3-dihydroxy-isovalerate.</text>
</comment>
<comment type="catalytic activity">
    <reaction evidence="1">
        <text>(2R)-2,3-dihydroxy-3-methylbutanoate + NADP(+) = (2S)-2-acetolactate + NADPH + H(+)</text>
        <dbReference type="Rhea" id="RHEA:22068"/>
        <dbReference type="ChEBI" id="CHEBI:15378"/>
        <dbReference type="ChEBI" id="CHEBI:49072"/>
        <dbReference type="ChEBI" id="CHEBI:57783"/>
        <dbReference type="ChEBI" id="CHEBI:58349"/>
        <dbReference type="ChEBI" id="CHEBI:58476"/>
        <dbReference type="EC" id="1.1.1.86"/>
    </reaction>
</comment>
<comment type="catalytic activity">
    <reaction evidence="1">
        <text>(2R,3R)-2,3-dihydroxy-3-methylpentanoate + NADP(+) = (S)-2-ethyl-2-hydroxy-3-oxobutanoate + NADPH + H(+)</text>
        <dbReference type="Rhea" id="RHEA:13493"/>
        <dbReference type="ChEBI" id="CHEBI:15378"/>
        <dbReference type="ChEBI" id="CHEBI:49256"/>
        <dbReference type="ChEBI" id="CHEBI:49258"/>
        <dbReference type="ChEBI" id="CHEBI:57783"/>
        <dbReference type="ChEBI" id="CHEBI:58349"/>
        <dbReference type="EC" id="1.1.1.86"/>
    </reaction>
</comment>
<comment type="cofactor">
    <cofactor evidence="1">
        <name>Mg(2+)</name>
        <dbReference type="ChEBI" id="CHEBI:18420"/>
    </cofactor>
    <text evidence="1">Binds 2 magnesium ions per subunit.</text>
</comment>
<comment type="pathway">
    <text evidence="1">Amino-acid biosynthesis; L-isoleucine biosynthesis; L-isoleucine from 2-oxobutanoate: step 2/4.</text>
</comment>
<comment type="pathway">
    <text evidence="1">Amino-acid biosynthesis; L-valine biosynthesis; L-valine from pyruvate: step 2/4.</text>
</comment>
<comment type="similarity">
    <text evidence="1">Belongs to the ketol-acid reductoisomerase family.</text>
</comment>
<evidence type="ECO:0000255" key="1">
    <source>
        <dbReference type="HAMAP-Rule" id="MF_00435"/>
    </source>
</evidence>
<evidence type="ECO:0000255" key="2">
    <source>
        <dbReference type="PROSITE-ProRule" id="PRU01197"/>
    </source>
</evidence>
<evidence type="ECO:0000255" key="3">
    <source>
        <dbReference type="PROSITE-ProRule" id="PRU01198"/>
    </source>
</evidence>
<gene>
    <name evidence="1" type="primary">ilvC</name>
    <name type="ordered locus">sce3732</name>
</gene>
<proteinExistence type="inferred from homology"/>
<feature type="chain" id="PRO_1000080646" description="Ketol-acid reductoisomerase (NADP(+))">
    <location>
        <begin position="1"/>
        <end position="337"/>
    </location>
</feature>
<feature type="domain" description="KARI N-terminal Rossmann" evidence="2">
    <location>
        <begin position="2"/>
        <end position="182"/>
    </location>
</feature>
<feature type="domain" description="KARI C-terminal knotted" evidence="3">
    <location>
        <begin position="183"/>
        <end position="328"/>
    </location>
</feature>
<feature type="active site" evidence="1">
    <location>
        <position position="108"/>
    </location>
</feature>
<feature type="binding site" evidence="1">
    <location>
        <begin position="25"/>
        <end position="28"/>
    </location>
    <ligand>
        <name>NADP(+)</name>
        <dbReference type="ChEBI" id="CHEBI:58349"/>
    </ligand>
</feature>
<feature type="binding site" evidence="1">
    <location>
        <position position="51"/>
    </location>
    <ligand>
        <name>NADP(+)</name>
        <dbReference type="ChEBI" id="CHEBI:58349"/>
    </ligand>
</feature>
<feature type="binding site" evidence="1">
    <location>
        <position position="53"/>
    </location>
    <ligand>
        <name>NADP(+)</name>
        <dbReference type="ChEBI" id="CHEBI:58349"/>
    </ligand>
</feature>
<feature type="binding site" evidence="1">
    <location>
        <begin position="83"/>
        <end position="86"/>
    </location>
    <ligand>
        <name>NADP(+)</name>
        <dbReference type="ChEBI" id="CHEBI:58349"/>
    </ligand>
</feature>
<feature type="binding site" evidence="1">
    <location>
        <position position="134"/>
    </location>
    <ligand>
        <name>NADP(+)</name>
        <dbReference type="ChEBI" id="CHEBI:58349"/>
    </ligand>
</feature>
<feature type="binding site" evidence="1">
    <location>
        <position position="191"/>
    </location>
    <ligand>
        <name>Mg(2+)</name>
        <dbReference type="ChEBI" id="CHEBI:18420"/>
        <label>1</label>
    </ligand>
</feature>
<feature type="binding site" evidence="1">
    <location>
        <position position="191"/>
    </location>
    <ligand>
        <name>Mg(2+)</name>
        <dbReference type="ChEBI" id="CHEBI:18420"/>
        <label>2</label>
    </ligand>
</feature>
<feature type="binding site" evidence="1">
    <location>
        <position position="195"/>
    </location>
    <ligand>
        <name>Mg(2+)</name>
        <dbReference type="ChEBI" id="CHEBI:18420"/>
        <label>1</label>
    </ligand>
</feature>
<feature type="binding site" evidence="1">
    <location>
        <position position="227"/>
    </location>
    <ligand>
        <name>Mg(2+)</name>
        <dbReference type="ChEBI" id="CHEBI:18420"/>
        <label>2</label>
    </ligand>
</feature>
<feature type="binding site" evidence="1">
    <location>
        <position position="231"/>
    </location>
    <ligand>
        <name>Mg(2+)</name>
        <dbReference type="ChEBI" id="CHEBI:18420"/>
        <label>2</label>
    </ligand>
</feature>
<feature type="binding site" evidence="1">
    <location>
        <position position="252"/>
    </location>
    <ligand>
        <name>substrate</name>
    </ligand>
</feature>
<accession>A9GW78</accession>
<sequence length="337" mass="36354">MAKIFYDNDADLSLIQSKKVAIVGYGSQGHAHALNLRDSGVTVIVALPEGSKSRPKAQAAGLQVATVSEAAKAADVIMILAPDTSQARIYNEQIAPHLGPGKTLMFAHGFNIRFNTITPPPSVDVSMIAPKGPGHRVRETFEAGGGVPALLAVHQDASGKAEAQALAYAKGIGATRAGVLLTTFAEETETDLFGEQAVLCGGASELVKAGFETLVNAGYQPEIAYFECLHELKLIVDLMYRGGLNYMRYSISDTAEHGDYVSGPRVITDKTREEMKRILAEIQSGEFARKWIAENEAGRPKFEATRAKEREQRLEIVGANLRKMMPFIDPVTIKPGD</sequence>